<dbReference type="EMBL" id="CU329670">
    <property type="protein sequence ID" value="CCD31348.1"/>
    <property type="molecule type" value="Genomic_DNA"/>
</dbReference>
<dbReference type="RefSeq" id="XP_004001803.1">
    <property type="nucleotide sequence ID" value="XM_004001754.1"/>
</dbReference>
<dbReference type="SMR" id="G2TRL1"/>
<dbReference type="BioGRID" id="280645">
    <property type="interactions" value="11"/>
</dbReference>
<dbReference type="STRING" id="284812.G2TRL1"/>
<dbReference type="iPTMnet" id="G2TRL1"/>
<dbReference type="PaxDb" id="4896-SPAC186.04c.1"/>
<dbReference type="EnsemblFungi" id="SPAC186.04c.1">
    <property type="protein sequence ID" value="SPAC186.04c.1:pep"/>
    <property type="gene ID" value="SPAC186.04c"/>
</dbReference>
<dbReference type="PomBase" id="SPAC186.04c"/>
<dbReference type="VEuPathDB" id="FungiDB:SPAC186.04c"/>
<dbReference type="eggNOG" id="KOG0224">
    <property type="taxonomic scope" value="Eukaryota"/>
</dbReference>
<dbReference type="HOGENOM" id="CLU_1533451_0_0_1"/>
<dbReference type="InParanoid" id="G2TRL1"/>
<dbReference type="PRO" id="PR:G2TRL1"/>
<dbReference type="Proteomes" id="UP000002485">
    <property type="component" value="Chromosome I"/>
</dbReference>
<dbReference type="GO" id="GO:0005829">
    <property type="term" value="C:cytosol"/>
    <property type="evidence" value="ECO:0007005"/>
    <property type="project" value="PomBase"/>
</dbReference>
<dbReference type="GO" id="GO:0005634">
    <property type="term" value="C:nucleus"/>
    <property type="evidence" value="ECO:0007005"/>
    <property type="project" value="PomBase"/>
</dbReference>
<evidence type="ECO:0000256" key="1">
    <source>
        <dbReference type="SAM" id="MobiDB-lite"/>
    </source>
</evidence>
<evidence type="ECO:0000269" key="2">
    <source>
    </source>
</evidence>
<reference key="1">
    <citation type="journal article" date="2002" name="Nature">
        <title>The genome sequence of Schizosaccharomyces pombe.</title>
        <authorList>
            <person name="Wood V."/>
            <person name="Gwilliam R."/>
            <person name="Rajandream M.A."/>
            <person name="Lyne M.H."/>
            <person name="Lyne R."/>
            <person name="Stewart A."/>
            <person name="Sgouros J.G."/>
            <person name="Peat N."/>
            <person name="Hayles J."/>
            <person name="Baker S.G."/>
            <person name="Basham D."/>
            <person name="Bowman S."/>
            <person name="Brooks K."/>
            <person name="Brown D."/>
            <person name="Brown S."/>
            <person name="Chillingworth T."/>
            <person name="Churcher C.M."/>
            <person name="Collins M."/>
            <person name="Connor R."/>
            <person name="Cronin A."/>
            <person name="Davis P."/>
            <person name="Feltwell T."/>
            <person name="Fraser A."/>
            <person name="Gentles S."/>
            <person name="Goble A."/>
            <person name="Hamlin N."/>
            <person name="Harris D.E."/>
            <person name="Hidalgo J."/>
            <person name="Hodgson G."/>
            <person name="Holroyd S."/>
            <person name="Hornsby T."/>
            <person name="Howarth S."/>
            <person name="Huckle E.J."/>
            <person name="Hunt S."/>
            <person name="Jagels K."/>
            <person name="James K.D."/>
            <person name="Jones L."/>
            <person name="Jones M."/>
            <person name="Leather S."/>
            <person name="McDonald S."/>
            <person name="McLean J."/>
            <person name="Mooney P."/>
            <person name="Moule S."/>
            <person name="Mungall K.L."/>
            <person name="Murphy L.D."/>
            <person name="Niblett D."/>
            <person name="Odell C."/>
            <person name="Oliver K."/>
            <person name="O'Neil S."/>
            <person name="Pearson D."/>
            <person name="Quail M.A."/>
            <person name="Rabbinowitsch E."/>
            <person name="Rutherford K.M."/>
            <person name="Rutter S."/>
            <person name="Saunders D."/>
            <person name="Seeger K."/>
            <person name="Sharp S."/>
            <person name="Skelton J."/>
            <person name="Simmonds M.N."/>
            <person name="Squares R."/>
            <person name="Squares S."/>
            <person name="Stevens K."/>
            <person name="Taylor K."/>
            <person name="Taylor R.G."/>
            <person name="Tivey A."/>
            <person name="Walsh S.V."/>
            <person name="Warren T."/>
            <person name="Whitehead S."/>
            <person name="Woodward J.R."/>
            <person name="Volckaert G."/>
            <person name="Aert R."/>
            <person name="Robben J."/>
            <person name="Grymonprez B."/>
            <person name="Weltjens I."/>
            <person name="Vanstreels E."/>
            <person name="Rieger M."/>
            <person name="Schaefer M."/>
            <person name="Mueller-Auer S."/>
            <person name="Gabel C."/>
            <person name="Fuchs M."/>
            <person name="Duesterhoeft A."/>
            <person name="Fritzc C."/>
            <person name="Holzer E."/>
            <person name="Moestl D."/>
            <person name="Hilbert H."/>
            <person name="Borzym K."/>
            <person name="Langer I."/>
            <person name="Beck A."/>
            <person name="Lehrach H."/>
            <person name="Reinhardt R."/>
            <person name="Pohl T.M."/>
            <person name="Eger P."/>
            <person name="Zimmermann W."/>
            <person name="Wedler H."/>
            <person name="Wambutt R."/>
            <person name="Purnelle B."/>
            <person name="Goffeau A."/>
            <person name="Cadieu E."/>
            <person name="Dreano S."/>
            <person name="Gloux S."/>
            <person name="Lelaure V."/>
            <person name="Mottier S."/>
            <person name="Galibert F."/>
            <person name="Aves S.J."/>
            <person name="Xiang Z."/>
            <person name="Hunt C."/>
            <person name="Moore K."/>
            <person name="Hurst S.M."/>
            <person name="Lucas M."/>
            <person name="Rochet M."/>
            <person name="Gaillardin C."/>
            <person name="Tallada V.A."/>
            <person name="Garzon A."/>
            <person name="Thode G."/>
            <person name="Daga R.R."/>
            <person name="Cruzado L."/>
            <person name="Jimenez J."/>
            <person name="Sanchez M."/>
            <person name="del Rey F."/>
            <person name="Benito J."/>
            <person name="Dominguez A."/>
            <person name="Revuelta J.L."/>
            <person name="Moreno S."/>
            <person name="Armstrong J."/>
            <person name="Forsburg S.L."/>
            <person name="Cerutti L."/>
            <person name="Lowe T."/>
            <person name="McCombie W.R."/>
            <person name="Paulsen I."/>
            <person name="Potashkin J."/>
            <person name="Shpakovski G.V."/>
            <person name="Ussery D."/>
            <person name="Barrell B.G."/>
            <person name="Nurse P."/>
        </authorList>
    </citation>
    <scope>NUCLEOTIDE SEQUENCE [LARGE SCALE GENOMIC DNA]</scope>
    <source>
        <strain>972 / ATCC 24843</strain>
    </source>
</reference>
<reference key="2">
    <citation type="journal article" date="2011" name="Science">
        <title>Comparative functional genomics of the fission yeasts.</title>
        <authorList>
            <person name="Rhind N."/>
            <person name="Chen Z."/>
            <person name="Yassour M."/>
            <person name="Thompson D.A."/>
            <person name="Haas B.J."/>
            <person name="Habib N."/>
            <person name="Wapinski I."/>
            <person name="Roy S."/>
            <person name="Lin M.F."/>
            <person name="Heiman D.I."/>
            <person name="Young S.K."/>
            <person name="Furuya K."/>
            <person name="Guo Y."/>
            <person name="Pidoux A."/>
            <person name="Chen H.M."/>
            <person name="Robbertse B."/>
            <person name="Goldberg J.M."/>
            <person name="Aoki K."/>
            <person name="Bayne E.H."/>
            <person name="Berlin A.M."/>
            <person name="Desjardins C.A."/>
            <person name="Dobbs E."/>
            <person name="Dukaj L."/>
            <person name="Fan L."/>
            <person name="FitzGerald M.G."/>
            <person name="French C."/>
            <person name="Gujja S."/>
            <person name="Hansen K."/>
            <person name="Keifenheim D."/>
            <person name="Levin J.Z."/>
            <person name="Mosher R.A."/>
            <person name="Mueller C.A."/>
            <person name="Pfiffner J."/>
            <person name="Priest M."/>
            <person name="Russ C."/>
            <person name="Smialowska A."/>
            <person name="Swoboda P."/>
            <person name="Sykes S.M."/>
            <person name="Vaughn M."/>
            <person name="Vengrova S."/>
            <person name="Yoder R."/>
            <person name="Zeng Q."/>
            <person name="Allshire R."/>
            <person name="Baulcombe D."/>
            <person name="Birren B.W."/>
            <person name="Brown W."/>
            <person name="Ekwall K."/>
            <person name="Kellis M."/>
            <person name="Leatherwood J."/>
            <person name="Levin H."/>
            <person name="Margalit H."/>
            <person name="Martienssen R."/>
            <person name="Nieduszynski C.A."/>
            <person name="Spatafora J.W."/>
            <person name="Friedman N."/>
            <person name="Dalgaard J.Z."/>
            <person name="Baumann P."/>
            <person name="Niki H."/>
            <person name="Regev A."/>
            <person name="Nusbaum C."/>
        </authorList>
    </citation>
    <scope>REVISION OF GENE MODEL</scope>
</reference>
<reference key="3">
    <citation type="journal article" date="2006" name="Nat. Biotechnol.">
        <title>ORFeome cloning and global analysis of protein localization in the fission yeast Schizosaccharomyces pombe.</title>
        <authorList>
            <person name="Matsuyama A."/>
            <person name="Arai R."/>
            <person name="Yashiroda Y."/>
            <person name="Shirai A."/>
            <person name="Kamata A."/>
            <person name="Sekido S."/>
            <person name="Kobayashi Y."/>
            <person name="Hashimoto A."/>
            <person name="Hamamoto M."/>
            <person name="Hiraoka Y."/>
            <person name="Horinouchi S."/>
            <person name="Yoshida M."/>
        </authorList>
    </citation>
    <scope>SUBCELLULAR LOCATION [LARGE SCALE ANALYSIS]</scope>
</reference>
<protein>
    <recommendedName>
        <fullName>Uncharacterized protein C186.04c</fullName>
    </recommendedName>
</protein>
<accession>G2TRL1</accession>
<comment type="subcellular location">
    <subcellularLocation>
        <location evidence="2">Cytoplasm</location>
    </subcellularLocation>
    <subcellularLocation>
        <location evidence="2">Nucleus</location>
    </subcellularLocation>
</comment>
<gene>
    <name type="ORF">SPAC186.04c</name>
</gene>
<keyword id="KW-0963">Cytoplasm</keyword>
<keyword id="KW-0539">Nucleus</keyword>
<keyword id="KW-1185">Reference proteome</keyword>
<organism>
    <name type="scientific">Schizosaccharomyces pombe (strain 972 / ATCC 24843)</name>
    <name type="common">Fission yeast</name>
    <dbReference type="NCBI Taxonomy" id="284812"/>
    <lineage>
        <taxon>Eukaryota</taxon>
        <taxon>Fungi</taxon>
        <taxon>Dikarya</taxon>
        <taxon>Ascomycota</taxon>
        <taxon>Taphrinomycotina</taxon>
        <taxon>Schizosaccharomycetes</taxon>
        <taxon>Schizosaccharomycetales</taxon>
        <taxon>Schizosaccharomycetaceae</taxon>
        <taxon>Schizosaccharomyces</taxon>
    </lineage>
</organism>
<proteinExistence type="predicted"/>
<sequence>MNTSSRIQLPSSNDAHVYDGRSNEPKASKRSYVNLTRQMRPKDALKMNISSPNLKDLSKFADPDAQQWLEGYLAGKLEDNSKTPRSNFVDPLYEELNARRKPNKPVWSLSGPLPHVLGNSVVEKLEARSRASSVSNSRLNSRTNSSVSLKGMDGSSSWKNKIKNAVSNVTDQSKR</sequence>
<feature type="chain" id="PRO_0000416653" description="Uncharacterized protein C186.04c">
    <location>
        <begin position="1"/>
        <end position="175"/>
    </location>
</feature>
<feature type="region of interest" description="Disordered" evidence="1">
    <location>
        <begin position="1"/>
        <end position="31"/>
    </location>
</feature>
<feature type="region of interest" description="Disordered" evidence="1">
    <location>
        <begin position="127"/>
        <end position="175"/>
    </location>
</feature>
<feature type="compositionally biased region" description="Polar residues" evidence="1">
    <location>
        <begin position="1"/>
        <end position="14"/>
    </location>
</feature>
<feature type="compositionally biased region" description="Basic and acidic residues" evidence="1">
    <location>
        <begin position="16"/>
        <end position="27"/>
    </location>
</feature>
<feature type="compositionally biased region" description="Low complexity" evidence="1">
    <location>
        <begin position="130"/>
        <end position="149"/>
    </location>
</feature>
<feature type="compositionally biased region" description="Polar residues" evidence="1">
    <location>
        <begin position="154"/>
        <end position="175"/>
    </location>
</feature>
<name>YLY4_SCHPO</name>